<comment type="function">
    <text evidence="9 12 13 14 17 18">NF-kappa-B is a pleiotropic transcription factor present in almost all cell types and is the endpoint of a series of signal transduction events that are initiated by a vast array of stimuli related to many biological processes such as inflammation, immunity, differentiation, cell growth, tumorigenesis and apoptosis. NF-kappa-B is a homo- or heterodimeric complex formed by the Rel-like domain-containing proteins RELA/p65, RELB, NFKB1/p105, NFKB1/p50, REL and NFKB2/p52 and the heterodimeric p65-p50 complex appears to be most abundant one. The dimers bind at kappa-B sites in the DNA of their target genes and the individual dimers have distinct preferences for different kappa-B sites that they can bind with distinguishable affinity and specificity. Different dimer combinations act as transcriptional activators or repressors, respectively. NF-kappa-B is controlled by various mechanisms of post-translational modification and subcellular compartmentalization as well as by interactions with other cofactors or corepressors. NF-kappa-B complexes are held in the cytoplasm in an inactive state complexed with members of the NF-kappa-B inhibitor (I-kappa-B) family. In a conventional activation pathway, I-kappa-B is phosphorylated by I-kappa-B kinases (IKKs) in response to different activators, subsequently degraded thus liberating the active NF-kappa-B complex which translocates to the nucleus. NF-kappa-B heterodimeric p65-p50 and RelB-p50 complexes are transcriptional activators. The NF-kappa-B p50-p50 homodimer is a transcriptional repressor, but can act as a transcriptional activator when associated with BCL3. NFKB1 appears to have dual functions such as cytoplasmic retention of attached NF-kappa-B proteins by p105 and generation of p50 by a cotranslational processing. The proteasome-mediated process ensures the production of both p50 and p105 and preserves their independent function, although processing of NFKB1/p105 also appears to occur post-translationally. p50 binds to the kappa-B consensus sequence 5'-GGRNNYYCC-3', located in the enhancer region of genes involved in immune response and acute phase reactions. Plays a role in the regulation of apoptosis. In a complex with MAP3K8, NFKB1/p105 represses MAP3K8-induced MAPK signaling; active MAP3K8 is released by proteasome-dependent degradation of NFKB1/p105.</text>
</comment>
<comment type="function">
    <molecule>Nuclear factor NF-kappa-B p105 subunit</molecule>
    <text evidence="2">P105 is the precursor of the active p50 subunit (Nuclear factor NF-kappa-B p50 subunit) of the nuclear factor NF-kappa-B. Acts as a cytoplasmic retention of attached NF-kappa-B proteins by p105.</text>
</comment>
<comment type="function">
    <molecule>Nuclear factor NF-kappa-B p50 subunit</molecule>
    <text evidence="2">Constitutes the active form, which associates with RELA/p65 to form the NF-kappa-B p65-p50 complex to form a transcription factor. Together with RELA/p65, binds to the kappa-B consensus sequence 5'-GGRNNYYCC-3', located in the enhancer region of genes involved in immune response and acute phase reactions.</text>
</comment>
<comment type="function">
    <molecule>Isoform 3</molecule>
    <text evidence="15">Isoform 3 (p98) (but not p84 or p105) acts as a transactivator of NF-kappa-B-regulated gene expression.</text>
</comment>
<comment type="function">
    <molecule>Isoform 5</molecule>
    <text evidence="10">Acts as an inhibitor of transactivation of p50 NF-kappa-B subunit, probably by sequestering it in the cytoplasm.</text>
</comment>
<comment type="function">
    <molecule>Isoform 6</molecule>
    <text evidence="16">Acts as an inhibitor of transactivation of p50 NF-kappa-B subunit, probably by sequestering it in the cytoplasm.</text>
</comment>
<comment type="function">
    <molecule>Isoform 7</molecule>
    <text evidence="16">Acts as an inhibitor of transactivation of p50 NF-kappa-B subunit, probably by sequestering it in the cytoplasm.</text>
</comment>
<comment type="subunit">
    <text evidence="2 7 8 11 12">Component of the NF-kappa-B p65-p50 complex (By similarity). Homodimer; component of the NF-kappa-B p50-p50 complex (By similarity). Component of the NF-kappa-B p105-p50 complex (By similarity). Component of the NF-kappa-B p50-c-Rel complex (By similarity). Component of a complex consisting of the NF-kappa-B p50-p50 homodimer and BCL3 (By similarity). Also interacts with MAP3K8 (By similarity). NF-kappa-B p50 subunit interacts with NCOA3 coactivator, which may coactivate NF-kappa-B dependent expression via its histone acetyltransferase activity (By similarity). Interacts with TSC22D3; this interaction prevents nuclear translocation and DNA-binding (By similarity). Interacts with SPAG9 and UNC5CL (By similarity). NFKB1/p105 interacts with CFLAR; the interaction inhibits p105 processing into p50 (By similarity). NFKB1/p105 forms a ternary complex with MAP3K8 and TNIP2 (By similarity). Interacts with GSK3B; the interaction prevents processing of p105 to p50 (By similarity). NFKB1/p50 interacts with NFKBIE (By similarity). NFKB1/p50 interacts with NFKBIZ (PubMed:11356851, PubMed:15241416). Nuclear factor NF-kappa-B p50 subunit interacts with NFKBID (PubMed:11931770). Directly interacts with MEN1 (By similarity). Interacts with HIF1AN (By similarity). Interacts with FEM1AA; interaction is direct (PubMed:18270204).</text>
</comment>
<comment type="interaction">
    <interactant intactId="EBI-643958">
        <id>P25799</id>
    </interactant>
    <interactant intactId="EBI-4285802">
        <id>Q9DBR0</id>
        <label>Akap8</label>
    </interactant>
    <organismsDiffer>false</organismsDiffer>
    <experiments>4</experiments>
</comment>
<comment type="interaction">
    <interactant intactId="EBI-643958">
        <id>P25799</id>
    </interactant>
    <interactant intactId="EBI-301912">
        <id>O09106</id>
        <label>Hdac1</label>
    </interactant>
    <organismsDiffer>false</organismsDiffer>
    <experiments>2</experiments>
</comment>
<comment type="interaction">
    <interactant intactId="EBI-643958">
        <id>P25799</id>
    </interactant>
    <interactant intactId="EBI-644400">
        <id>Q04207</id>
        <label>Rela</label>
    </interactant>
    <organismsDiffer>false</organismsDiffer>
    <experiments>6</experiments>
</comment>
<comment type="interaction">
    <interactant intactId="EBI-643958">
        <id>P25799</id>
    </interactant>
    <interactant intactId="EBI-455189">
        <id>Q15788</id>
        <label>NCOA1</label>
    </interactant>
    <organismsDiffer>true</organismsDiffer>
    <experiments>2</experiments>
</comment>
<comment type="interaction">
    <interactant intactId="EBI-643974">
        <id>P25799-1</id>
    </interactant>
    <interactant intactId="EBI-644400">
        <id>Q04207</id>
        <label>Rela</label>
    </interactant>
    <organismsDiffer>false</organismsDiffer>
    <experiments>6</experiments>
</comment>
<comment type="interaction">
    <interactant intactId="EBI-1209193">
        <id>PRO_0000030312</id>
    </interactant>
    <interactant intactId="EBI-644400">
        <id>Q04207</id>
        <label>Rela</label>
    </interactant>
    <organismsDiffer>false</organismsDiffer>
    <experiments>3</experiments>
</comment>
<comment type="interaction">
    <interactant intactId="EBI-1209141">
        <id>PRO_0000030313</id>
    </interactant>
    <interactant intactId="EBI-15861272">
        <id>Q3V096</id>
        <label>Ankrd42</label>
    </interactant>
    <organismsDiffer>false</organismsDiffer>
    <experiments>3</experiments>
</comment>
<comment type="interaction">
    <interactant intactId="EBI-1209141">
        <id>PRO_0000030313</id>
    </interactant>
    <interactant intactId="EBI-1209145">
        <id>Q04863</id>
        <label>Relb</label>
    </interactant>
    <organismsDiffer>false</organismsDiffer>
    <experiments>2</experiments>
</comment>
<comment type="subcellular location">
    <molecule>Nuclear factor NF-kappa-B p105 subunit</molecule>
    <subcellularLocation>
        <location evidence="2">Cytoplasm</location>
    </subcellularLocation>
</comment>
<comment type="subcellular location">
    <molecule>Nuclear factor NF-kappa-B p50 subunit</molecule>
    <subcellularLocation>
        <location evidence="20">Nucleus</location>
    </subcellularLocation>
    <subcellularLocation>
        <location evidence="20">Cytoplasm</location>
    </subcellularLocation>
    <text evidence="20">Association with NFKBIA inhibitor (I-kappa-B), promotes its retention in the cytoplasm in an inactive form. Translocates into the nucleus following NFKBIA degradation.</text>
</comment>
<comment type="subcellular location">
    <molecule>Isoform 5</molecule>
    <subcellularLocation>
        <location evidence="10">Cytoplasm</location>
    </subcellularLocation>
</comment>
<comment type="subcellular location">
    <molecule>Isoform 6</molecule>
    <subcellularLocation>
        <location evidence="16">Nucleus</location>
    </subcellularLocation>
    <subcellularLocation>
        <location evidence="16">Cytoplasm</location>
    </subcellularLocation>
</comment>
<comment type="subcellular location">
    <molecule>Isoform 7</molecule>
    <subcellularLocation>
        <location evidence="16">Nucleus</location>
    </subcellularLocation>
</comment>
<comment type="alternative products">
    <event type="alternative splicing"/>
    <isoform>
        <id>P25799-1</id>
        <name>1</name>
        <name>p105</name>
        <sequence type="displayed"/>
    </isoform>
    <isoform>
        <id>P25799-2</id>
        <name>2</name>
        <name>p84</name>
        <sequence type="described" ref="VSP_005583"/>
    </isoform>
    <isoform>
        <id>P25799-3</id>
        <name>3</name>
        <name>p98</name>
        <sequence type="described" ref="VSP_005584"/>
    </isoform>
    <isoform>
        <id>P25799-4</id>
        <name>4</name>
        <sequence type="described" ref="VSP_017237 VSP_017238"/>
    </isoform>
    <isoform>
        <id>P25799-5</id>
        <name>5</name>
        <name>P70</name>
        <name>I-kappa-B gamma</name>
        <sequence type="described" ref="VSP_017236"/>
    </isoform>
    <isoform>
        <id>P25799-6</id>
        <name>6</name>
        <name>p63</name>
        <name>I-kappa-B gamma-1</name>
        <sequence type="described" ref="VSP_017236 VSP_005584"/>
    </isoform>
    <isoform>
        <id>P25799-7</id>
        <name>7</name>
        <name>p55</name>
        <name>I-kappa-B gamma-2</name>
        <sequence type="described" ref="VSP_017236 VSP_005583"/>
    </isoform>
</comment>
<comment type="induction">
    <text>By phorbol ester and TNF-alpha.</text>
</comment>
<comment type="domain">
    <text evidence="2">The C-terminus of p105 might be involved in cytoplasmic retention, inhibition of DNA-binding, and transcription activation.</text>
</comment>
<comment type="domain">
    <text evidence="2">Glycine-rich region (GRR) is a critical element in the generation of p50 (Nuclear factor NF-kappa-B p50 subunit) by acting as a proteasomal 'stop signal', which leads to limited proteasomal degradation of the C-terminus, while generating p50.</text>
</comment>
<comment type="PTM">
    <text evidence="2 19">Generation of the NF-kappa-B p50 (Nuclear factor NF-kappa-B p50 subunit) transcription factor takes place both cotranslationally and post-translationally via non-mutually exclusive mechanisms (By similarity). A cotranslational processing allows the production of both p50 and p105 (Nuclear factor NF-kappa-B p105 subunit) from a single NFKB1 mRNA (PubMed:9529257). While translation occurs, the particular unfolded structure after the GRR repeat region acts as a substrate for the proteasome, promoting degradation of the C-terminus (PubMed:9529257). The GRR acts as a proteasomal 'stop signal', protecting the region upstream of the GRR from degradation and promoting generation of p50 (PubMed:9529257). It is unclear if limited proteasome degradation during cotranslational processing depends on ubiquitination (PubMed:9529257). NF-kappa-B p50 is also generated post-translationally following ubiquitination by the KPC complex, leading to limited processing by the proteasome downstream of the GRR region, thereby generating p50 (By similarity).</text>
</comment>
<comment type="PTM">
    <molecule>Nuclear factor NF-kappa-B p105 subunit</molecule>
    <text evidence="2">Phosphorylation at the C-terminus by IKBKB/IKKB acts as a signal for ubiquitination and promotes either complete degradation or processing to generate the NF-kappa-B p50 (Nuclear factor NF-kappa-B p50 subunit) (By similarity). Phosphorylation at Ser-910 primes p105 for proteolytic processing in response to TNF-alpha stimulation (By similarity). Phosphorylation at Ser-926, Ser-930 and Ser-935 are required for BTRC/BTRCP-mediated ubiquitination and proteolysis (By similarity). Phosphorylation at Ser-930 is also required for ubiquitination by the KPC complex and limited processing to generate NF-kappa-B p50 (Nuclear factor NF-kappa-B p50 subunit) (By similarity).</text>
</comment>
<comment type="PTM">
    <molecule>Nuclear factor NF-kappa-B p105 subunit</molecule>
    <text evidence="2">Polyubiquitinated at multiple Lys residues in the C-terminus (By similarity). Polyubiquitinated by the SCF(FBXW11) and SCF(BTRC) complexes following phosphorylation at Ser-926, Ser-930 and Ser-935, leading to its complete degradation (By similarity). In contrast, polyubiquitination by the KPC complex following phosphorylation at Ser-930 leads to limited proteosomal processing and generation of the active NF-kappa-B p50 (Nuclear factor NF-kappa-B p50 subunit) (By similarity).</text>
</comment>
<comment type="PTM">
    <text evidence="2">S-nitrosylation of Cys-59 affects DNA binding.</text>
</comment>
<comment type="PTM">
    <text evidence="2">The covalent modification of cysteine by 15-deoxy-Delta12,14-prostaglandin-J2 is autocatalytic and reversible. It may occur as an alternative to other cysteine modifications, such as S-nitrosylation and S-palmitoylation.</text>
</comment>
<comment type="sequence caution" evidence="26">
    <conflict type="erroneous initiation">
        <sequence resource="EMBL-CDS" id="BAC35117"/>
    </conflict>
    <text>Truncated N-terminus.</text>
</comment>
<sequence>MADDDPYGTGQMFHLNTALTHSIFNAELYSPEIPLSTDGPYLQILEQPKQRGFRFRYVCEGPSHGGLPGASSEKNKKSYPQVKICNYVGPAKVIVQLVTNGKNIHLHAHSLVGKHCEDGVCTVTAGPKDMVVGFANLGILHVTKKKVFETLEARMTEACIRGYNPGLLVHSDLAYLQAEGGGDRQLTDREKEIIRQAAVQQTKEMDLSVVRLMFTAFLPDSTGSFTRRLEPVVSDAIYDSKAPNASNLKIVRMDRTAGCVTGGEEIYLLCDKVQKDDIQIRFYEEEENGGVWEGFGDFSPTDVHRQFAIVFKTPKYKDVNITKPASVFVQLRRKSDLETSEPKPFLYYPEIKDKEEVQRKRQKLMPNFSDSFGGGSGAGAGGGGMFGSGGGGGSTGSPGPGYGYSNYGFPPYGGITFHPGVTKSNAGVTHGTINTKFKNGPKDCAKSDDEESLTLPEKETEGEGPSLPMACTKTEPIALASTMEDKEQDMGFQDNLFLEKALQLARRHANALFDYAVTGDVKMLLAVQRHLTAVQDENGDSVLHLAIIHLHAQLVRDLLEVTSGLISDDIINMRNDLYQTPLHLAVITKQEDVVEDLLRVGADLSLLDRWGNSVLHLAAKEGHDRILSILLKSRKAAPLIDHPNGEGLNAIHIAVMSNSLPCLLLLVAAGAEVNAQEQKSGRTALHLAVEYDNISLAGCLLLEGDAHVDSTTYDGTTPLHIAAGRGSTRLAALLKAAGADPLVENFEPLYDLDDSWEKAGEDEGVVPGTTPLDMAANWQVFDILNGKPYEPVFTSDDILPQGDMKQLTEDTRLQLCKLLEIPDPDKNWATLAQKLGLGILNNAFRLSPAPSKTLMDNYEVSGGTIKELMEALQQMGYTEAIEVIQAAFRTPATTASSPVTTAQVHCLPLSSSSTRQHIDELRDSDSVCDSGVETSFRKLSFTESLTGDSPLLSLNKMPHGYGQEGPIEGKI</sequence>
<accession>P25799</accession>
<accession>B2RRQ6</accession>
<accession>Q3TZE8</accession>
<accession>Q3V2V6</accession>
<accession>Q6TDG8</accession>
<accession>Q75ZL1</accession>
<accession>Q80Y21</accession>
<accession>Q8C712</accession>
<proteinExistence type="evidence at protein level"/>
<keyword id="KW-0002">3D-structure</keyword>
<keyword id="KW-0007">Acetylation</keyword>
<keyword id="KW-0010">Activator</keyword>
<keyword id="KW-0025">Alternative splicing</keyword>
<keyword id="KW-0040">ANK repeat</keyword>
<keyword id="KW-0053">Apoptosis</keyword>
<keyword id="KW-0963">Cytoplasm</keyword>
<keyword id="KW-0903">Direct protein sequencing</keyword>
<keyword id="KW-0238">DNA-binding</keyword>
<keyword id="KW-0379">Hydroxylation</keyword>
<keyword id="KW-1017">Isopeptide bond</keyword>
<keyword id="KW-0449">Lipoprotein</keyword>
<keyword id="KW-0539">Nucleus</keyword>
<keyword id="KW-0597">Phosphoprotein</keyword>
<keyword id="KW-1185">Reference proteome</keyword>
<keyword id="KW-0677">Repeat</keyword>
<keyword id="KW-0702">S-nitrosylation</keyword>
<keyword id="KW-0804">Transcription</keyword>
<keyword id="KW-0805">Transcription regulation</keyword>
<keyword id="KW-0832">Ubl conjugation</keyword>
<reference key="1">
    <citation type="journal article" date="1990" name="Cell">
        <title>Cloning of the p50 DNA binding subunit of NF-kappa B: homology to rel and dorsal.</title>
        <authorList>
            <person name="Ghosh S."/>
            <person name="Gifford A.M."/>
            <person name="Riviere L.R."/>
            <person name="Tempst P."/>
            <person name="Nolan G.P."/>
            <person name="Baltimore D."/>
        </authorList>
    </citation>
    <scope>NUCLEOTIDE SEQUENCE [MRNA] (ISOFORM 1)</scope>
    <scope>FUNCTION</scope>
    <source>
        <tissue>Lung</tissue>
        <tissue>Spleen</tissue>
    </source>
</reference>
<reference key="2">
    <citation type="journal article" date="1992" name="Cell">
        <title>I kappa B gamma, a 70 kd protein identical to the C-terminal half of p110 NF-kappa B: a new member of the I kappa B family.</title>
        <authorList>
            <person name="Inoue J."/>
            <person name="Kerr L.D."/>
            <person name="Kakizuka A."/>
            <person name="Verma I.M."/>
        </authorList>
    </citation>
    <scope>NUCLEOTIDE SEQUENCE [MRNA] (ISOFORM 5)</scope>
    <scope>SUBCELLULAR LOCATION</scope>
</reference>
<reference key="3">
    <citation type="journal article" date="1993" name="Cell Growth Differ.">
        <title>The activity of a 70 kilodalton I kappa B molecule identical to the carboxyl terminus of the p105 NF-kappa B precursor is modulated by protein kinase A.</title>
        <authorList>
            <person name="Gerondakis S."/>
            <person name="Morrice N."/>
            <person name="Richardson I.B."/>
            <person name="Wettenhall R."/>
            <person name="Fecondo J."/>
            <person name="Grumont R.J."/>
        </authorList>
    </citation>
    <scope>NUCLEOTIDE SEQUENCE [MRNA] (ISOFORM 5)</scope>
    <scope>PARTIAL PROTEIN SEQUENCE</scope>
</reference>
<reference key="4">
    <citation type="journal article" date="1994" name="Mol. Cell. Biol.">
        <title>Alternate RNA splicing of murine nfkb1 generates a nuclear isoform of the p50 precursor NF-kappa B1 that can function as a transactivator of NF-kappa B-regulated transcription.</title>
        <authorList>
            <person name="Grumont R.J."/>
            <person name="Fecondo J."/>
            <person name="Gerondakis S."/>
        </authorList>
    </citation>
    <scope>NUCLEOTIDE SEQUENCE [MRNA] (ISOFORMS 2 AND 3)</scope>
    <scope>FUNCTION</scope>
</reference>
<reference key="5">
    <citation type="submission" date="2003-09" db="EMBL/GenBank/DDBJ databases">
        <title>Mus musculus transcription factor NF-kappa-B DNA binding subunit(p105) mRNA, complete cds.</title>
        <authorList>
            <person name="Ohara O."/>
            <person name="Kitamura H."/>
            <person name="Nakagawa T."/>
        </authorList>
    </citation>
    <scope>NUCLEOTIDE SEQUENCE [MRNA] (ISOFORM 1)</scope>
    <source>
        <strain>C57BL/6CrSlc</strain>
        <tissue>Spleen</tissue>
    </source>
</reference>
<reference key="6">
    <citation type="submission" date="2004-01" db="EMBL/GenBank/DDBJ databases">
        <authorList>
            <person name="Bleich A."/>
            <person name="Hedrich H.J."/>
            <person name="Schlegelberger B."/>
            <person name="Maehler M."/>
        </authorList>
    </citation>
    <scope>NUCLEOTIDE SEQUENCE [MRNA] (ISOFORM 1)</scope>
    <source>
        <strain>C3H/HeJBir</strain>
        <strain>C57BL/6J</strain>
    </source>
</reference>
<reference key="7">
    <citation type="submission" date="2005-09" db="EMBL/GenBank/DDBJ databases">
        <authorList>
            <person name="Mural R.J."/>
            <person name="Adams M.D."/>
            <person name="Myers E.W."/>
            <person name="Smith H.O."/>
            <person name="Venter J.C."/>
        </authorList>
    </citation>
    <scope>NUCLEOTIDE SEQUENCE [LARGE SCALE GENOMIC DNA]</scope>
</reference>
<reference key="8">
    <citation type="journal article" date="2004" name="Genome Res.">
        <title>The status, quality, and expansion of the NIH full-length cDNA project: the Mammalian Gene Collection (MGC).</title>
        <authorList>
            <consortium name="The MGC Project Team"/>
        </authorList>
    </citation>
    <scope>NUCLEOTIDE SEQUENCE [LARGE SCALE MRNA] (ISOFORMS 1 AND 4)</scope>
    <source>
        <tissue>Brain</tissue>
        <tissue>Embryo</tissue>
    </source>
</reference>
<reference key="9">
    <citation type="submission" date="2003-09" db="EMBL/GenBank/DDBJ databases">
        <authorList>
            <person name="Gerhauser I."/>
            <person name="Ulrich R."/>
            <person name="Baumgartner W."/>
        </authorList>
    </citation>
    <scope>NUCLEOTIDE SEQUENCE [MRNA] OF 54-129</scope>
    <source>
        <strain>C57BL/6J</strain>
        <tissue>Lung carcinoma</tissue>
    </source>
</reference>
<reference key="10">
    <citation type="journal article" date="2005" name="Science">
        <title>The transcriptional landscape of the mammalian genome.</title>
        <authorList>
            <person name="Carninci P."/>
            <person name="Kasukawa T."/>
            <person name="Katayama S."/>
            <person name="Gough J."/>
            <person name="Frith M.C."/>
            <person name="Maeda N."/>
            <person name="Oyama R."/>
            <person name="Ravasi T."/>
            <person name="Lenhard B."/>
            <person name="Wells C."/>
            <person name="Kodzius R."/>
            <person name="Shimokawa K."/>
            <person name="Bajic V.B."/>
            <person name="Brenner S.E."/>
            <person name="Batalov S."/>
            <person name="Forrest A.R."/>
            <person name="Zavolan M."/>
            <person name="Davis M.J."/>
            <person name="Wilming L.G."/>
            <person name="Aidinis V."/>
            <person name="Allen J.E."/>
            <person name="Ambesi-Impiombato A."/>
            <person name="Apweiler R."/>
            <person name="Aturaliya R.N."/>
            <person name="Bailey T.L."/>
            <person name="Bansal M."/>
            <person name="Baxter L."/>
            <person name="Beisel K.W."/>
            <person name="Bersano T."/>
            <person name="Bono H."/>
            <person name="Chalk A.M."/>
            <person name="Chiu K.P."/>
            <person name="Choudhary V."/>
            <person name="Christoffels A."/>
            <person name="Clutterbuck D.R."/>
            <person name="Crowe M.L."/>
            <person name="Dalla E."/>
            <person name="Dalrymple B.P."/>
            <person name="de Bono B."/>
            <person name="Della Gatta G."/>
            <person name="di Bernardo D."/>
            <person name="Down T."/>
            <person name="Engstrom P."/>
            <person name="Fagiolini M."/>
            <person name="Faulkner G."/>
            <person name="Fletcher C.F."/>
            <person name="Fukushima T."/>
            <person name="Furuno M."/>
            <person name="Futaki S."/>
            <person name="Gariboldi M."/>
            <person name="Georgii-Hemming P."/>
            <person name="Gingeras T.R."/>
            <person name="Gojobori T."/>
            <person name="Green R.E."/>
            <person name="Gustincich S."/>
            <person name="Harbers M."/>
            <person name="Hayashi Y."/>
            <person name="Hensch T.K."/>
            <person name="Hirokawa N."/>
            <person name="Hill D."/>
            <person name="Huminiecki L."/>
            <person name="Iacono M."/>
            <person name="Ikeo K."/>
            <person name="Iwama A."/>
            <person name="Ishikawa T."/>
            <person name="Jakt M."/>
            <person name="Kanapin A."/>
            <person name="Katoh M."/>
            <person name="Kawasawa Y."/>
            <person name="Kelso J."/>
            <person name="Kitamura H."/>
            <person name="Kitano H."/>
            <person name="Kollias G."/>
            <person name="Krishnan S.P."/>
            <person name="Kruger A."/>
            <person name="Kummerfeld S.K."/>
            <person name="Kurochkin I.V."/>
            <person name="Lareau L.F."/>
            <person name="Lazarevic D."/>
            <person name="Lipovich L."/>
            <person name="Liu J."/>
            <person name="Liuni S."/>
            <person name="McWilliam S."/>
            <person name="Madan Babu M."/>
            <person name="Madera M."/>
            <person name="Marchionni L."/>
            <person name="Matsuda H."/>
            <person name="Matsuzawa S."/>
            <person name="Miki H."/>
            <person name="Mignone F."/>
            <person name="Miyake S."/>
            <person name="Morris K."/>
            <person name="Mottagui-Tabar S."/>
            <person name="Mulder N."/>
            <person name="Nakano N."/>
            <person name="Nakauchi H."/>
            <person name="Ng P."/>
            <person name="Nilsson R."/>
            <person name="Nishiguchi S."/>
            <person name="Nishikawa S."/>
            <person name="Nori F."/>
            <person name="Ohara O."/>
            <person name="Okazaki Y."/>
            <person name="Orlando V."/>
            <person name="Pang K.C."/>
            <person name="Pavan W.J."/>
            <person name="Pavesi G."/>
            <person name="Pesole G."/>
            <person name="Petrovsky N."/>
            <person name="Piazza S."/>
            <person name="Reed J."/>
            <person name="Reid J.F."/>
            <person name="Ring B.Z."/>
            <person name="Ringwald M."/>
            <person name="Rost B."/>
            <person name="Ruan Y."/>
            <person name="Salzberg S.L."/>
            <person name="Sandelin A."/>
            <person name="Schneider C."/>
            <person name="Schoenbach C."/>
            <person name="Sekiguchi K."/>
            <person name="Semple C.A."/>
            <person name="Seno S."/>
            <person name="Sessa L."/>
            <person name="Sheng Y."/>
            <person name="Shibata Y."/>
            <person name="Shimada H."/>
            <person name="Shimada K."/>
            <person name="Silva D."/>
            <person name="Sinclair B."/>
            <person name="Sperling S."/>
            <person name="Stupka E."/>
            <person name="Sugiura K."/>
            <person name="Sultana R."/>
            <person name="Takenaka Y."/>
            <person name="Taki K."/>
            <person name="Tammoja K."/>
            <person name="Tan S.L."/>
            <person name="Tang S."/>
            <person name="Taylor M.S."/>
            <person name="Tegner J."/>
            <person name="Teichmann S.A."/>
            <person name="Ueda H.R."/>
            <person name="van Nimwegen E."/>
            <person name="Verardo R."/>
            <person name="Wei C.L."/>
            <person name="Yagi K."/>
            <person name="Yamanishi H."/>
            <person name="Zabarovsky E."/>
            <person name="Zhu S."/>
            <person name="Zimmer A."/>
            <person name="Hide W."/>
            <person name="Bult C."/>
            <person name="Grimmond S.M."/>
            <person name="Teasdale R.D."/>
            <person name="Liu E.T."/>
            <person name="Brusic V."/>
            <person name="Quackenbush J."/>
            <person name="Wahlestedt C."/>
            <person name="Mattick J.S."/>
            <person name="Hume D.A."/>
            <person name="Kai C."/>
            <person name="Sasaki D."/>
            <person name="Tomaru Y."/>
            <person name="Fukuda S."/>
            <person name="Kanamori-Katayama M."/>
            <person name="Suzuki M."/>
            <person name="Aoki J."/>
            <person name="Arakawa T."/>
            <person name="Iida J."/>
            <person name="Imamura K."/>
            <person name="Itoh M."/>
            <person name="Kato T."/>
            <person name="Kawaji H."/>
            <person name="Kawagashira N."/>
            <person name="Kawashima T."/>
            <person name="Kojima M."/>
            <person name="Kondo S."/>
            <person name="Konno H."/>
            <person name="Nakano K."/>
            <person name="Ninomiya N."/>
            <person name="Nishio T."/>
            <person name="Okada M."/>
            <person name="Plessy C."/>
            <person name="Shibata K."/>
            <person name="Shiraki T."/>
            <person name="Suzuki S."/>
            <person name="Tagami M."/>
            <person name="Waki K."/>
            <person name="Watahiki A."/>
            <person name="Okamura-Oho Y."/>
            <person name="Suzuki H."/>
            <person name="Kawai J."/>
            <person name="Hayashizaki Y."/>
        </authorList>
    </citation>
    <scope>NUCLEOTIDE SEQUENCE [LARGE SCALE MRNA] OF 65-971 (ISOFORM 4)</scope>
    <scope>NUCLEOTIDE SEQUENCE [LARGE SCALE MRNA] OF 376-971 (ISOFORM 1)</scope>
    <source>
        <strain>C57BL/6J</strain>
        <strain>NOD</strain>
        <tissue>Inner ear</tissue>
        <tissue>Kidney</tissue>
        <tissue>Spleen</tissue>
    </source>
</reference>
<reference key="11">
    <citation type="journal article" date="1994" name="Proc. Natl. Acad. Sci. U.S.A.">
        <title>Alternative splicing of RNA transcripts encoded by the murine p105 NF-kappa B gene generates I kappa B gamma isoforms with different inhibitory activities.</title>
        <authorList>
            <person name="Grumont R.J."/>
            <person name="Gerondakis S."/>
        </authorList>
    </citation>
    <scope>ALTERNATIVE SPLICING (ISOFORMS 6 AND 7)</scope>
    <scope>SUBCELLULAR LOCATION</scope>
</reference>
<reference key="12">
    <citation type="journal article" date="1998" name="Cell">
        <title>Cotranslational biogenesis of NF-kappaB p50 by the 26S proteasome.</title>
        <authorList>
            <person name="Lin L."/>
            <person name="DeMartino G.N."/>
            <person name="Greene W.C."/>
        </authorList>
    </citation>
    <scope>COTRANSLATIONAL FOLDING OF P105</scope>
</reference>
<reference key="13">
    <citation type="journal article" date="2001" name="J. Biol. Chem.">
        <title>A novel IkappaB protein, IkappaB-zeta, induced by proinflammatory stimuli, negatively regulates nuclear factor-kappaB in the nuclei.</title>
        <authorList>
            <person name="Yamazaki S."/>
            <person name="Muta T."/>
            <person name="Takeshige K."/>
        </authorList>
    </citation>
    <scope>INTERACTION WITH NFKBIZ</scope>
</reference>
<reference key="14">
    <citation type="journal article" date="2002" name="Mol. Cell">
        <title>Peptide-induced negative selection of thymocytes activates transcription of an NF-kappa B inhibitor.</title>
        <authorList>
            <person name="Fiorini E."/>
            <person name="Schmitz I."/>
            <person name="Marissen W.E."/>
            <person name="Osborn S.L."/>
            <person name="Touma M."/>
            <person name="Sasada T."/>
            <person name="Reche P.A."/>
            <person name="Tibaldi E.V."/>
            <person name="Hussey R.E."/>
            <person name="Kruisbeek A.M."/>
            <person name="Reinherz E.L."/>
            <person name="Clayton L.K."/>
        </authorList>
    </citation>
    <scope>INTERACTION WITH NFKBID</scope>
</reference>
<reference key="15">
    <citation type="journal article" date="2004" name="J. Exp. Med.">
        <title>A defect in nucleosome remodeling prevents IL-12(p35) gene transcription in neonatal dendritic cells.</title>
        <authorList>
            <person name="Goriely S."/>
            <person name="Van Lint C."/>
            <person name="Dadkhah R."/>
            <person name="Libin M."/>
            <person name="De Wit D."/>
            <person name="Demonte D."/>
            <person name="Willems F."/>
            <person name="Goldman M."/>
        </authorList>
    </citation>
    <scope>IDENTIFICATION IN THE NF-KAPPA-B P65-P50 COMPLEX</scope>
</reference>
<reference key="16">
    <citation type="journal article" date="2004" name="Nature">
        <title>Regulation of Toll/IL-1-receptor-mediated gene expression by the inducible nuclear protein IkappaBzeta.</title>
        <authorList>
            <person name="Yamamoto M."/>
            <person name="Yamazaki S."/>
            <person name="Uematsu S."/>
            <person name="Sato S."/>
            <person name="Hemmi H."/>
            <person name="Hoshino K."/>
            <person name="Kaisho T."/>
            <person name="Kuwata H."/>
            <person name="Takeuchi O."/>
            <person name="Takeshige K."/>
            <person name="Saitoh T."/>
            <person name="Yamaoka S."/>
            <person name="Yamamoto N."/>
            <person name="Yamamoto S."/>
            <person name="Muta T."/>
            <person name="Takeda K."/>
            <person name="Akira S."/>
        </authorList>
    </citation>
    <scope>INTERACTION WITH NFKBIZ</scope>
</reference>
<reference key="17">
    <citation type="journal article" date="2008" name="J. Biol. Chem.">
        <title>Prostaglandin E receptor type 4-associated protein interacts directly with NF-kappaB1 and attenuates macrophage activation.</title>
        <authorList>
            <person name="Minami M."/>
            <person name="Shimizu K."/>
            <person name="Okamoto Y."/>
            <person name="Folco E."/>
            <person name="Ilasaca M.L."/>
            <person name="Feinberg M.W."/>
            <person name="Aikawa M."/>
            <person name="Libby P."/>
        </authorList>
    </citation>
    <scope>FUNCTION</scope>
    <scope>INTERACTION WITH FEM1AA</scope>
</reference>
<reference key="18">
    <citation type="journal article" date="2010" name="Cell">
        <title>A tissue-specific atlas of mouse protein phosphorylation and expression.</title>
        <authorList>
            <person name="Huttlin E.L."/>
            <person name="Jedrychowski M.P."/>
            <person name="Elias J.E."/>
            <person name="Goswami T."/>
            <person name="Rad R."/>
            <person name="Beausoleil S.A."/>
            <person name="Villen J."/>
            <person name="Haas W."/>
            <person name="Sowa M.E."/>
            <person name="Gygi S.P."/>
        </authorList>
    </citation>
    <scope>PHOSPHORYLATION [LARGE SCALE ANALYSIS] AT SER-447; SER-940 AND THR-946</scope>
    <scope>IDENTIFICATION BY MASS SPECTROMETRY [LARGE SCALE ANALYSIS]</scope>
    <source>
        <tissue>Brain</tissue>
        <tissue>Brown adipose tissue</tissue>
        <tissue>Heart</tissue>
        <tissue>Kidney</tissue>
        <tissue>Liver</tissue>
        <tissue>Lung</tissue>
        <tissue>Spleen</tissue>
    </source>
</reference>
<reference key="19">
    <citation type="journal article" date="1995" name="Nature">
        <title>Structure of NF-kappa B p50 homodimer bound to a kappa B site.</title>
        <authorList>
            <person name="Ghosh G."/>
            <person name="van Duyne G."/>
            <person name="Ghosh S."/>
            <person name="Sigler P.B."/>
        </authorList>
    </citation>
    <scope>X-RAY CRYSTALLOGRAPHY (2.3 ANGSTROMS) OF 39-364</scope>
    <scope>FUNCTION</scope>
</reference>
<reference key="20">
    <citation type="journal article" date="1997" name="Structure">
        <title>The role of DNA in the mechanism of NFkappaB dimer formation: crystal structures of the dimerization domains of the p50 and p65 subunits.</title>
        <authorList>
            <person name="Huang D.B."/>
            <person name="Huxford T."/>
            <person name="Chen Y.Q."/>
            <person name="Ghosh G."/>
        </authorList>
    </citation>
    <scope>X-RAY CRYSTALLOGRAPHY (2.2 ANGSTROMS) OF 245-350</scope>
    <scope>FUNCTION</scope>
</reference>
<reference key="21">
    <citation type="journal article" date="1998" name="Cell">
        <title>The crystal structure of the IkappaBalpha/NF-kappaB complex reveals mechanisms of NF-kappaB inactivation.</title>
        <authorList>
            <person name="Huxford T."/>
            <person name="Huang D.B."/>
            <person name="Malek S."/>
            <person name="Ghosh G."/>
        </authorList>
    </citation>
    <scope>X-RAY CRYSTALLOGRAPHY (2.3 ANGSTROMS) OF 245-363</scope>
    <scope>SUBCELLULAR LOCATION</scope>
</reference>
<reference key="22">
    <citation type="journal article" date="1998" name="Nature">
        <title>Crystal structure of p50/p65 heterodimer of transcription factor NF-kappaB bound to DNA.</title>
        <authorList>
            <person name="Chen F.E."/>
            <person name="Huang D.B."/>
            <person name="Chen Y.Q."/>
            <person name="Ghosh G."/>
        </authorList>
    </citation>
    <scope>X-RAY CRYSTALLOGRAPHY (2.9 ANGSTROMS) OF 39-350</scope>
    <scope>FUNCTION</scope>
</reference>
<reference key="23">
    <citation type="journal article" date="2002" name="J. Biol. Chem.">
        <title>The X-ray crystal structure of the NF-kappa B p50.p65 heterodimer bound to the interferon beta -kappa B site.</title>
        <authorList>
            <person name="Berkowitz B."/>
            <person name="Huang D.B."/>
            <person name="Chen-Park F.E."/>
            <person name="Sigler P.B."/>
            <person name="Ghosh G."/>
        </authorList>
    </citation>
    <scope>X-RAY CRYSTALLOGRAPHY (2.75 ANGSTROMS) OF 39-350</scope>
    <scope>FUNCTION</scope>
</reference>
<reference key="24">
    <citation type="journal article" date="2002" name="J. Biol. Chem.">
        <title>The kappa B DNA sequence from the HIV long terminal repeat functions as an allosteric regulator of HIV transcription.</title>
        <authorList>
            <person name="Chen-Park F.E."/>
            <person name="Huang D.B."/>
            <person name="Noro B."/>
            <person name="Thanos D."/>
            <person name="Ghosh G."/>
        </authorList>
    </citation>
    <scope>X-RAY CRYSTALLOGRAPHY (2.7 ANGSTROMS) OF 39-350</scope>
</reference>
<reference key="25">
    <citation type="journal article" date="2003" name="Proc. Natl. Acad. Sci. U.S.A.">
        <title>Crystal structure of NF-kappaB (p50)2 complexed to a high-affinity RNA aptamer.</title>
        <authorList>
            <person name="Huang D.B."/>
            <person name="Vu D."/>
            <person name="Cassiday L.A."/>
            <person name="Zimmerman J.M."/>
            <person name="Maher L.J. III"/>
            <person name="Ghosh G."/>
        </authorList>
    </citation>
    <scope>X-RAY CRYSTALLOGRAPHY (2.5 ANGSTROMS) OF 38-351 HOMODIMER COMPLEXED WITH RNA APTAMER</scope>
</reference>
<reference key="26">
    <citation type="journal article" date="2007" name="J. Mol. Biol.">
        <title>X-ray structure of a NF-kappaB p50/RelB/DNA complex reveals assembly of multiple dimers on tandem kappaB sites.</title>
        <authorList>
            <person name="Moorthy A.K."/>
            <person name="Huang D.B."/>
            <person name="Wang V.Y."/>
            <person name="Vu D."/>
            <person name="Ghosh G."/>
        </authorList>
    </citation>
    <scope>X-RAY CRYSTALLOGRAPHY (3.05 ANGSTROMS) OF 91-378 IN COMPLEX WITH RELB</scope>
</reference>
<organism>
    <name type="scientific">Mus musculus</name>
    <name type="common">Mouse</name>
    <dbReference type="NCBI Taxonomy" id="10090"/>
    <lineage>
        <taxon>Eukaryota</taxon>
        <taxon>Metazoa</taxon>
        <taxon>Chordata</taxon>
        <taxon>Craniata</taxon>
        <taxon>Vertebrata</taxon>
        <taxon>Euteleostomi</taxon>
        <taxon>Mammalia</taxon>
        <taxon>Eutheria</taxon>
        <taxon>Euarchontoglires</taxon>
        <taxon>Glires</taxon>
        <taxon>Rodentia</taxon>
        <taxon>Myomorpha</taxon>
        <taxon>Muroidea</taxon>
        <taxon>Muridae</taxon>
        <taxon>Murinae</taxon>
        <taxon>Mus</taxon>
        <taxon>Mus</taxon>
    </lineage>
</organism>
<protein>
    <recommendedName>
        <fullName>Nuclear factor NF-kappa-B p105 subunit</fullName>
    </recommendedName>
    <alternativeName>
        <fullName>DNA-binding factor KBF1</fullName>
    </alternativeName>
    <alternativeName>
        <fullName>EBP-1</fullName>
    </alternativeName>
    <alternativeName>
        <fullName>NF-kappa-B1 p84/NF-kappa-B1 p98</fullName>
    </alternativeName>
    <alternativeName>
        <fullName>Nuclear factor of kappa light polypeptide gene enhancer in B-cells 1</fullName>
    </alternativeName>
    <component>
        <recommendedName>
            <fullName>Nuclear factor NF-kappa-B p50 subunit</fullName>
        </recommendedName>
    </component>
</protein>
<evidence type="ECO:0000250" key="1"/>
<evidence type="ECO:0000250" key="2">
    <source>
        <dbReference type="UniProtKB" id="P19838"/>
    </source>
</evidence>
<evidence type="ECO:0000250" key="3">
    <source>
        <dbReference type="UniProtKB" id="Q63369"/>
    </source>
</evidence>
<evidence type="ECO:0000255" key="4"/>
<evidence type="ECO:0000255" key="5">
    <source>
        <dbReference type="PROSITE-ProRule" id="PRU00265"/>
    </source>
</evidence>
<evidence type="ECO:0000256" key="6">
    <source>
        <dbReference type="SAM" id="MobiDB-lite"/>
    </source>
</evidence>
<evidence type="ECO:0000269" key="7">
    <source>
    </source>
</evidence>
<evidence type="ECO:0000269" key="8">
    <source>
    </source>
</evidence>
<evidence type="ECO:0000269" key="9">
    <source>
    </source>
</evidence>
<evidence type="ECO:0000269" key="10">
    <source>
    </source>
</evidence>
<evidence type="ECO:0000269" key="11">
    <source>
    </source>
</evidence>
<evidence type="ECO:0000269" key="12">
    <source>
    </source>
</evidence>
<evidence type="ECO:0000269" key="13">
    <source>
    </source>
</evidence>
<evidence type="ECO:0000269" key="14">
    <source>
    </source>
</evidence>
<evidence type="ECO:0000269" key="15">
    <source>
    </source>
</evidence>
<evidence type="ECO:0000269" key="16">
    <source>
    </source>
</evidence>
<evidence type="ECO:0000269" key="17">
    <source>
    </source>
</evidence>
<evidence type="ECO:0000269" key="18">
    <source>
    </source>
</evidence>
<evidence type="ECO:0000269" key="19">
    <source>
    </source>
</evidence>
<evidence type="ECO:0000269" key="20">
    <source>
    </source>
</evidence>
<evidence type="ECO:0000303" key="21">
    <source>
    </source>
</evidence>
<evidence type="ECO:0000303" key="22">
    <source>
    </source>
</evidence>
<evidence type="ECO:0000303" key="23">
    <source>
    </source>
</evidence>
<evidence type="ECO:0000303" key="24">
    <source>
    </source>
</evidence>
<evidence type="ECO:0000303" key="25">
    <source>
    </source>
</evidence>
<evidence type="ECO:0000305" key="26"/>
<evidence type="ECO:0007744" key="27">
    <source>
    </source>
</evidence>
<evidence type="ECO:0007829" key="28">
    <source>
        <dbReference type="PDB" id="1BFS"/>
    </source>
</evidence>
<evidence type="ECO:0007829" key="29">
    <source>
        <dbReference type="PDB" id="1IKN"/>
    </source>
</evidence>
<evidence type="ECO:0007829" key="30">
    <source>
        <dbReference type="PDB" id="1LE9"/>
    </source>
</evidence>
<evidence type="ECO:0007829" key="31">
    <source>
        <dbReference type="PDB" id="1NFK"/>
    </source>
</evidence>
<evidence type="ECO:0007829" key="32">
    <source>
        <dbReference type="PDB" id="1OOA"/>
    </source>
</evidence>
<evidence type="ECO:0007829" key="33">
    <source>
        <dbReference type="PDB" id="1U36"/>
    </source>
</evidence>
<evidence type="ECO:0007829" key="34">
    <source>
        <dbReference type="PDB" id="1VKX"/>
    </source>
</evidence>
<evidence type="ECO:0007829" key="35">
    <source>
        <dbReference type="PDB" id="9BOR"/>
    </source>
</evidence>
<name>NFKB1_MOUSE</name>
<feature type="chain" id="PRO_0000030312" description="Nuclear factor NF-kappa-B p105 subunit">
    <location>
        <begin position="1"/>
        <end position="971"/>
    </location>
</feature>
<feature type="chain" id="PRO_0000030313" description="Nuclear factor NF-kappa-B p50 subunit" evidence="1">
    <location>
        <begin position="1"/>
        <end position="431"/>
    </location>
</feature>
<feature type="domain" description="RHD" evidence="5">
    <location>
        <begin position="40"/>
        <end position="365"/>
    </location>
</feature>
<feature type="repeat" description="ANK 1">
    <location>
        <begin position="538"/>
        <end position="567"/>
    </location>
</feature>
<feature type="repeat" description="ANK 2">
    <location>
        <begin position="577"/>
        <end position="606"/>
    </location>
</feature>
<feature type="repeat" description="ANK 3">
    <location>
        <begin position="610"/>
        <end position="639"/>
    </location>
</feature>
<feature type="repeat" description="ANK 4">
    <location>
        <begin position="646"/>
        <end position="675"/>
    </location>
</feature>
<feature type="repeat" description="ANK 5">
    <location>
        <begin position="680"/>
        <end position="710"/>
    </location>
</feature>
<feature type="repeat" description="ANK 6">
    <location>
        <begin position="714"/>
        <end position="743"/>
    </location>
</feature>
<feature type="repeat" description="ANK 7">
    <location>
        <begin position="767"/>
        <end position="797"/>
    </location>
</feature>
<feature type="domain" description="Death">
    <location>
        <begin position="801"/>
        <end position="888"/>
    </location>
</feature>
<feature type="region of interest" description="GRR" evidence="2">
    <location>
        <begin position="370"/>
        <end position="392"/>
    </location>
</feature>
<feature type="region of interest" description="Interaction with CFLAR" evidence="2">
    <location>
        <begin position="433"/>
        <end position="971"/>
    </location>
</feature>
<feature type="region of interest" description="Disordered" evidence="6">
    <location>
        <begin position="439"/>
        <end position="470"/>
    </location>
</feature>
<feature type="region of interest" description="Essential for interaction with HIF1AN" evidence="2">
    <location>
        <begin position="646"/>
        <end position="680"/>
    </location>
</feature>
<feature type="short sequence motif" description="Nuclear localization signal" evidence="4">
    <location>
        <begin position="358"/>
        <end position="363"/>
    </location>
</feature>
<feature type="site" description="Cleavage (when cotranslationally processed)" evidence="2">
    <location>
        <begin position="431"/>
        <end position="432"/>
    </location>
</feature>
<feature type="modified residue" description="S-nitrosocysteine; alternate" evidence="2">
    <location>
        <position position="59"/>
    </location>
</feature>
<feature type="modified residue" description="Phosphoserine; by PKA" evidence="4">
    <location>
        <position position="335"/>
    </location>
</feature>
<feature type="modified residue" description="N6-acetyllysine; by EP300" evidence="2">
    <location>
        <position position="438"/>
    </location>
</feature>
<feature type="modified residue" description="Phosphoserine" evidence="27">
    <location>
        <position position="447"/>
    </location>
</feature>
<feature type="modified residue" description="(3S)-3-hydroxyasparagine; by HIF1AN" evidence="2">
    <location>
        <position position="674"/>
    </location>
</feature>
<feature type="modified residue" description="Phosphoserine" evidence="3">
    <location>
        <position position="755"/>
    </location>
</feature>
<feature type="modified residue" description="Phosphoserine" evidence="2">
    <location>
        <position position="896"/>
    </location>
</feature>
<feature type="modified residue" description="Phosphoserine; by GSK3-beta; in vitro" evidence="2">
    <location>
        <position position="910"/>
    </location>
</feature>
<feature type="modified residue" description="Phosphoserine" evidence="2">
    <location>
        <position position="926"/>
    </location>
</feature>
<feature type="modified residue" description="Phosphoserine; by IKKB" evidence="2">
    <location>
        <position position="930"/>
    </location>
</feature>
<feature type="modified residue" description="Phosphoserine; by IKKB" evidence="2">
    <location>
        <position position="935"/>
    </location>
</feature>
<feature type="modified residue" description="Phosphoserine" evidence="27">
    <location>
        <position position="940"/>
    </location>
</feature>
<feature type="modified residue" description="Phosphothreonine" evidence="27">
    <location>
        <position position="946"/>
    </location>
</feature>
<feature type="lipid moiety-binding region" description="S-(15-deoxy-Delta12,14-prostaglandin J2-9-yl)cysteine; alternate" evidence="2">
    <location>
        <position position="59"/>
    </location>
</feature>
<feature type="cross-link" description="Glycyl lysine isopeptide (Lys-Gly) (interchain with G-Cter in SUMO2)" evidence="2">
    <location>
        <position position="323"/>
    </location>
</feature>
<feature type="splice variant" id="VSP_017236" description="In isoform 5, isoform 6 and isoform 7." evidence="21 25">
    <location>
        <begin position="1"/>
        <end position="364"/>
    </location>
</feature>
<feature type="splice variant" id="VSP_017237" description="In isoform 4." evidence="22 23">
    <original>DKEE</original>
    <variation>GTWV</variation>
    <location>
        <begin position="353"/>
        <end position="356"/>
    </location>
</feature>
<feature type="splice variant" id="VSP_017238" description="In isoform 4." evidence="22 23">
    <location>
        <begin position="357"/>
        <end position="971"/>
    </location>
</feature>
<feature type="splice variant" id="VSP_005583" description="In isoform 2 and isoform 7." evidence="24">
    <original>VFDILNGKPYEPVFTSDDILPQGDMKQLTEDTRLQLCKLLEIPDPDKNWATLAQKLGLGILNNAFRLSPAPSKTLMDNYEVSGGTIKELMEALQQMGYTEAIEVIQAAFRTPATTASSPVTTAQVHCLPLSSSSTRQHIDELRDSDSVCDSGVETSFRKLSFTESLTGDSPLLSLNKMPHGYGQEGPIEGKI</original>
    <variation>GT</variation>
    <location>
        <begin position="780"/>
        <end position="971"/>
    </location>
</feature>
<feature type="splice variant" id="VSP_005584" description="In isoform 3 and isoform 6." evidence="24">
    <original>VSGGTIKELMEALQQMGYTEAIEVIQAAFRTPATTASSPVTTAQVHCLPLSSSSTRQHIDELRDSDSVCDSGVETSFRKLSFTESLTGDSPLLSLNKMPHGYGQEGPIEGKI</original>
    <variation>MNSGIVTASVTVVWRHPSANSALQSLLLETAHCYL</variation>
    <location>
        <begin position="860"/>
        <end position="971"/>
    </location>
</feature>
<feature type="sequence conflict" description="In Ref. 9; AAR00341." evidence="26" ref="9">
    <original>L</original>
    <variation>P</variation>
    <location>
        <position position="111"/>
    </location>
</feature>
<feature type="sequence conflict" description="In Ref. 10; BAC35117." evidence="26" ref="10">
    <original>E</original>
    <variation>G</variation>
    <location>
        <position position="265"/>
    </location>
</feature>
<feature type="sequence conflict" description="In Ref. 10; BAE34261." evidence="26" ref="10">
    <original>H</original>
    <variation>D</variation>
    <location>
        <position position="530"/>
    </location>
</feature>
<feature type="sequence conflict" description="In Ref. 10; BAE34261." evidence="26" ref="10">
    <original>A</original>
    <variation>G</variation>
    <location>
        <position position="546"/>
    </location>
</feature>
<feature type="sequence conflict" description="In Ref. 1; AAA40415, 2; AAB21851 and 3; AAB28573." evidence="26" ref="1 2 3">
    <original>A</original>
    <variation>P</variation>
    <location>
        <position position="684"/>
    </location>
</feature>
<feature type="sequence conflict" description="In Ref. 10; BAE34261." evidence="26" ref="10">
    <original>A</original>
    <variation>T</variation>
    <location>
        <position position="732"/>
    </location>
</feature>
<feature type="sequence conflict" description="In Ref. 10; BAE43399." evidence="26" ref="10">
    <original>P</original>
    <variation>A</variation>
    <location>
        <position position="950"/>
    </location>
</feature>
<feature type="strand" evidence="31">
    <location>
        <begin position="41"/>
        <end position="46"/>
    </location>
</feature>
<feature type="strand" evidence="31">
    <location>
        <begin position="50"/>
        <end position="52"/>
    </location>
</feature>
<feature type="helix" evidence="31">
    <location>
        <begin position="58"/>
        <end position="60"/>
    </location>
</feature>
<feature type="strand" evidence="34">
    <location>
        <begin position="62"/>
        <end position="64"/>
    </location>
</feature>
<feature type="strand" evidence="32">
    <location>
        <begin position="74"/>
        <end position="76"/>
    </location>
</feature>
<feature type="strand" evidence="31">
    <location>
        <begin position="81"/>
        <end position="85"/>
    </location>
</feature>
<feature type="strand" evidence="31">
    <location>
        <begin position="92"/>
        <end position="98"/>
    </location>
</feature>
<feature type="strand" evidence="31">
    <location>
        <begin position="100"/>
        <end position="103"/>
    </location>
</feature>
<feature type="strand" evidence="31">
    <location>
        <begin position="108"/>
        <end position="113"/>
    </location>
</feature>
<feature type="strand" evidence="30">
    <location>
        <begin position="117"/>
        <end position="119"/>
    </location>
</feature>
<feature type="strand" evidence="31">
    <location>
        <begin position="120"/>
        <end position="124"/>
    </location>
</feature>
<feature type="strand" evidence="31">
    <location>
        <begin position="131"/>
        <end position="133"/>
    </location>
</feature>
<feature type="strand" evidence="31">
    <location>
        <begin position="138"/>
        <end position="140"/>
    </location>
</feature>
<feature type="helix" evidence="32">
    <location>
        <begin position="144"/>
        <end position="146"/>
    </location>
</feature>
<feature type="helix" evidence="31">
    <location>
        <begin position="147"/>
        <end position="160"/>
    </location>
</feature>
<feature type="strand" evidence="34">
    <location>
        <begin position="162"/>
        <end position="164"/>
    </location>
</feature>
<feature type="helix" evidence="31">
    <location>
        <begin position="165"/>
        <end position="169"/>
    </location>
</feature>
<feature type="helix" evidence="32">
    <location>
        <begin position="171"/>
        <end position="173"/>
    </location>
</feature>
<feature type="strand" evidence="31">
    <location>
        <begin position="179"/>
        <end position="182"/>
    </location>
</feature>
<feature type="helix" evidence="31">
    <location>
        <begin position="188"/>
        <end position="203"/>
    </location>
</feature>
<feature type="strand" evidence="31">
    <location>
        <begin position="209"/>
        <end position="219"/>
    </location>
</feature>
<feature type="strand" evidence="31">
    <location>
        <begin position="221"/>
        <end position="223"/>
    </location>
</feature>
<feature type="strand" evidence="31">
    <location>
        <begin position="225"/>
        <end position="228"/>
    </location>
</feature>
<feature type="strand" evidence="32">
    <location>
        <begin position="232"/>
        <end position="239"/>
    </location>
</feature>
<feature type="strand" evidence="34">
    <location>
        <begin position="240"/>
        <end position="242"/>
    </location>
</feature>
<feature type="turn" evidence="32">
    <location>
        <begin position="243"/>
        <end position="246"/>
    </location>
</feature>
<feature type="strand" evidence="33">
    <location>
        <begin position="250"/>
        <end position="254"/>
    </location>
</feature>
<feature type="strand" evidence="33">
    <location>
        <begin position="256"/>
        <end position="259"/>
    </location>
</feature>
<feature type="strand" evidence="33">
    <location>
        <begin position="265"/>
        <end position="271"/>
    </location>
</feature>
<feature type="turn" evidence="31">
    <location>
        <begin position="275"/>
        <end position="277"/>
    </location>
</feature>
<feature type="strand" evidence="33">
    <location>
        <begin position="279"/>
        <end position="284"/>
    </location>
</feature>
<feature type="helix" evidence="28">
    <location>
        <begin position="287"/>
        <end position="289"/>
    </location>
</feature>
<feature type="strand" evidence="33">
    <location>
        <begin position="292"/>
        <end position="295"/>
    </location>
</feature>
<feature type="helix" evidence="33">
    <location>
        <begin position="300"/>
        <end position="302"/>
    </location>
</feature>
<feature type="turn" evidence="33">
    <location>
        <begin position="305"/>
        <end position="307"/>
    </location>
</feature>
<feature type="strand" evidence="33">
    <location>
        <begin position="308"/>
        <end position="312"/>
    </location>
</feature>
<feature type="strand" evidence="33">
    <location>
        <begin position="325"/>
        <end position="332"/>
    </location>
</feature>
<feature type="turn" evidence="33">
    <location>
        <begin position="334"/>
        <end position="336"/>
    </location>
</feature>
<feature type="strand" evidence="33">
    <location>
        <begin position="343"/>
        <end position="348"/>
    </location>
</feature>
<feature type="strand" evidence="29">
    <location>
        <begin position="351"/>
        <end position="354"/>
    </location>
</feature>
<feature type="helix" evidence="35">
    <location>
        <begin position="357"/>
        <end position="361"/>
    </location>
</feature>
<gene>
    <name type="primary">Nfkb1</name>
</gene>
<dbReference type="EMBL" id="M57999">
    <property type="protein sequence ID" value="AAA40415.1"/>
    <property type="molecule type" value="mRNA"/>
</dbReference>
<dbReference type="EMBL" id="S89033">
    <property type="protein sequence ID" value="AAB21851.1"/>
    <property type="molecule type" value="mRNA"/>
</dbReference>
<dbReference type="EMBL" id="S66656">
    <property type="protein sequence ID" value="AAB28573.1"/>
    <property type="molecule type" value="mRNA"/>
</dbReference>
<dbReference type="EMBL" id="AB119195">
    <property type="protein sequence ID" value="BAC84979.1"/>
    <property type="molecule type" value="mRNA"/>
</dbReference>
<dbReference type="EMBL" id="AY521462">
    <property type="protein sequence ID" value="AAS00547.1"/>
    <property type="molecule type" value="mRNA"/>
</dbReference>
<dbReference type="EMBL" id="AY521463">
    <property type="protein sequence ID" value="AAS00548.1"/>
    <property type="molecule type" value="mRNA"/>
</dbReference>
<dbReference type="EMBL" id="CH466532">
    <property type="protein sequence ID" value="EDL12143.1"/>
    <property type="molecule type" value="Genomic_DNA"/>
</dbReference>
<dbReference type="EMBL" id="BC050841">
    <property type="protein sequence ID" value="AAH50841.1"/>
    <property type="molecule type" value="mRNA"/>
</dbReference>
<dbReference type="EMBL" id="BC138535">
    <property type="protein sequence ID" value="AAI38536.1"/>
    <property type="molecule type" value="mRNA"/>
</dbReference>
<dbReference type="EMBL" id="BC138536">
    <property type="protein sequence ID" value="AAI38537.1"/>
    <property type="molecule type" value="mRNA"/>
</dbReference>
<dbReference type="EMBL" id="AY423849">
    <property type="protein sequence ID" value="AAR00341.1"/>
    <property type="molecule type" value="mRNA"/>
</dbReference>
<dbReference type="EMBL" id="AK052726">
    <property type="protein sequence ID" value="BAC35117.1"/>
    <property type="status" value="ALT_INIT"/>
    <property type="molecule type" value="mRNA"/>
</dbReference>
<dbReference type="EMBL" id="AK089660">
    <property type="protein sequence ID" value="BAE43399.1"/>
    <property type="molecule type" value="mRNA"/>
</dbReference>
<dbReference type="EMBL" id="AK157915">
    <property type="protein sequence ID" value="BAE34261.1"/>
    <property type="molecule type" value="mRNA"/>
</dbReference>
<dbReference type="CCDS" id="CCDS17858.1">
    <molecule id="P25799-1"/>
</dbReference>
<dbReference type="PIR" id="A35697">
    <property type="entry name" value="A35697"/>
</dbReference>
<dbReference type="RefSeq" id="NP_001397371.1">
    <molecule id="P25799-3"/>
    <property type="nucleotide sequence ID" value="NM_001410442.1"/>
</dbReference>
<dbReference type="RefSeq" id="NP_032715.2">
    <molecule id="P25799-1"/>
    <property type="nucleotide sequence ID" value="NM_008689.3"/>
</dbReference>
<dbReference type="RefSeq" id="XP_006501169.1">
    <property type="nucleotide sequence ID" value="XM_006501106.2"/>
</dbReference>
<dbReference type="PDB" id="1BFS">
    <property type="method" value="X-ray"/>
    <property type="resolution" value="2.20 A"/>
    <property type="chains" value="A=245-350"/>
</dbReference>
<dbReference type="PDB" id="1IKN">
    <property type="method" value="X-ray"/>
    <property type="resolution" value="2.30 A"/>
    <property type="chains" value="C=245-363"/>
</dbReference>
<dbReference type="PDB" id="1LE5">
    <property type="method" value="X-ray"/>
    <property type="resolution" value="2.75 A"/>
    <property type="chains" value="B/F=39-350"/>
</dbReference>
<dbReference type="PDB" id="1LE9">
    <property type="method" value="X-ray"/>
    <property type="resolution" value="3.00 A"/>
    <property type="chains" value="B/F=39-350"/>
</dbReference>
<dbReference type="PDB" id="1LEI">
    <property type="method" value="X-ray"/>
    <property type="resolution" value="2.70 A"/>
    <property type="chains" value="B=39-350"/>
</dbReference>
<dbReference type="PDB" id="1NFK">
    <property type="method" value="X-ray"/>
    <property type="resolution" value="2.30 A"/>
    <property type="chains" value="A/B=39-363"/>
</dbReference>
<dbReference type="PDB" id="1OOA">
    <property type="method" value="X-ray"/>
    <property type="resolution" value="2.45 A"/>
    <property type="chains" value="A/B=39-363"/>
</dbReference>
<dbReference type="PDB" id="1U36">
    <property type="method" value="X-ray"/>
    <property type="resolution" value="1.89 A"/>
    <property type="chains" value="A=245-350"/>
</dbReference>
<dbReference type="PDB" id="1U3J">
    <property type="method" value="X-ray"/>
    <property type="resolution" value="1.90 A"/>
    <property type="chains" value="A=245-350"/>
</dbReference>
<dbReference type="PDB" id="1U3Y">
    <property type="method" value="X-ray"/>
    <property type="resolution" value="1.90 A"/>
    <property type="chains" value="A=245-350"/>
</dbReference>
<dbReference type="PDB" id="1U3Z">
    <property type="method" value="X-ray"/>
    <property type="resolution" value="1.90 A"/>
    <property type="chains" value="A=245-350"/>
</dbReference>
<dbReference type="PDB" id="1U41">
    <property type="method" value="X-ray"/>
    <property type="resolution" value="2.20 A"/>
    <property type="chains" value="A/B/C/D=245-350"/>
</dbReference>
<dbReference type="PDB" id="1U42">
    <property type="method" value="X-ray"/>
    <property type="resolution" value="2.70 A"/>
    <property type="chains" value="A=245-350"/>
</dbReference>
<dbReference type="PDB" id="1VKX">
    <property type="method" value="X-ray"/>
    <property type="resolution" value="2.90 A"/>
    <property type="chains" value="B=39-350"/>
</dbReference>
<dbReference type="PDB" id="2I9T">
    <property type="method" value="X-ray"/>
    <property type="resolution" value="2.80 A"/>
    <property type="chains" value="B=39-350"/>
</dbReference>
<dbReference type="PDB" id="2V2T">
    <property type="method" value="X-ray"/>
    <property type="resolution" value="3.05 A"/>
    <property type="chains" value="B=38-363"/>
</dbReference>
<dbReference type="PDB" id="3JV4">
    <property type="method" value="X-ray"/>
    <property type="resolution" value="3.15 A"/>
    <property type="chains" value="B/D/F=245-359"/>
</dbReference>
<dbReference type="PDB" id="8TKL">
    <property type="method" value="X-ray"/>
    <property type="resolution" value="3.00 A"/>
    <property type="chains" value="A/B=39-350"/>
</dbReference>
<dbReference type="PDB" id="8TKM">
    <property type="method" value="X-ray"/>
    <property type="resolution" value="2.80 A"/>
    <property type="chains" value="A/B=39-350"/>
</dbReference>
<dbReference type="PDB" id="8TKN">
    <property type="method" value="X-ray"/>
    <property type="resolution" value="2.80 A"/>
    <property type="chains" value="A/B=39-350"/>
</dbReference>
<dbReference type="PDB" id="9BOR">
    <property type="method" value="X-ray"/>
    <property type="resolution" value="2.00 A"/>
    <property type="chains" value="B/C=245-376"/>
</dbReference>
<dbReference type="PDBsum" id="1BFS"/>
<dbReference type="PDBsum" id="1IKN"/>
<dbReference type="PDBsum" id="1LE5"/>
<dbReference type="PDBsum" id="1LE9"/>
<dbReference type="PDBsum" id="1LEI"/>
<dbReference type="PDBsum" id="1NFK"/>
<dbReference type="PDBsum" id="1OOA"/>
<dbReference type="PDBsum" id="1U36"/>
<dbReference type="PDBsum" id="1U3J"/>
<dbReference type="PDBsum" id="1U3Y"/>
<dbReference type="PDBsum" id="1U3Z"/>
<dbReference type="PDBsum" id="1U41"/>
<dbReference type="PDBsum" id="1U42"/>
<dbReference type="PDBsum" id="1VKX"/>
<dbReference type="PDBsum" id="2I9T"/>
<dbReference type="PDBsum" id="2V2T"/>
<dbReference type="PDBsum" id="3JV4"/>
<dbReference type="PDBsum" id="8TKL"/>
<dbReference type="PDBsum" id="8TKM"/>
<dbReference type="PDBsum" id="8TKN"/>
<dbReference type="PDBsum" id="9BOR"/>
<dbReference type="SASBDB" id="P25799"/>
<dbReference type="SMR" id="P25799"/>
<dbReference type="BioGRID" id="201751">
    <property type="interactions" value="16"/>
</dbReference>
<dbReference type="CORUM" id="P25799"/>
<dbReference type="DIP" id="DIP-85N"/>
<dbReference type="FunCoup" id="P25799">
    <property type="interactions" value="3636"/>
</dbReference>
<dbReference type="IntAct" id="P25799">
    <property type="interactions" value="24"/>
</dbReference>
<dbReference type="MINT" id="P25799"/>
<dbReference type="STRING" id="10090.ENSMUSP00000029812"/>
<dbReference type="ChEMBL" id="CHEMBL1949489"/>
<dbReference type="GlyGen" id="P25799">
    <property type="glycosylation" value="3 sites, 1 O-linked glycan (3 sites)"/>
</dbReference>
<dbReference type="iPTMnet" id="P25799"/>
<dbReference type="PhosphoSitePlus" id="P25799"/>
<dbReference type="jPOST" id="P25799"/>
<dbReference type="PaxDb" id="10090-ENSMUSP00000029812"/>
<dbReference type="PeptideAtlas" id="P25799"/>
<dbReference type="ProteomicsDB" id="287411">
    <molecule id="P25799-1"/>
</dbReference>
<dbReference type="ProteomicsDB" id="287412">
    <molecule id="P25799-2"/>
</dbReference>
<dbReference type="ProteomicsDB" id="287413">
    <molecule id="P25799-3"/>
</dbReference>
<dbReference type="ProteomicsDB" id="287414">
    <molecule id="P25799-4"/>
</dbReference>
<dbReference type="ProteomicsDB" id="287415">
    <molecule id="P25799-5"/>
</dbReference>
<dbReference type="ProteomicsDB" id="287416">
    <molecule id="P25799-6"/>
</dbReference>
<dbReference type="ProteomicsDB" id="287417">
    <molecule id="P25799-7"/>
</dbReference>
<dbReference type="Pumba" id="P25799"/>
<dbReference type="ABCD" id="P25799">
    <property type="antibodies" value="1 sequenced antibody"/>
</dbReference>
<dbReference type="Antibodypedia" id="3415">
    <property type="antibodies" value="2427 antibodies from 51 providers"/>
</dbReference>
<dbReference type="DNASU" id="18033"/>
<dbReference type="Ensembl" id="ENSMUST00000029812.14">
    <molecule id="P25799-1"/>
    <property type="protein sequence ID" value="ENSMUSP00000029812.8"/>
    <property type="gene ID" value="ENSMUSG00000028163.18"/>
</dbReference>
<dbReference type="Ensembl" id="ENSMUST00000164430.7">
    <molecule id="P25799-1"/>
    <property type="protein sequence ID" value="ENSMUSP00000128345.3"/>
    <property type="gene ID" value="ENSMUSG00000028163.18"/>
</dbReference>
<dbReference type="GeneID" id="18033"/>
<dbReference type="KEGG" id="mmu:18033"/>
<dbReference type="UCSC" id="uc008rlw.1">
    <molecule id="P25799-1"/>
    <property type="organism name" value="mouse"/>
</dbReference>
<dbReference type="UCSC" id="uc008rly.1">
    <molecule id="P25799-4"/>
    <property type="organism name" value="mouse"/>
</dbReference>
<dbReference type="UCSC" id="uc012cyf.1">
    <molecule id="P25799-6"/>
    <property type="organism name" value="mouse"/>
</dbReference>
<dbReference type="AGR" id="MGI:97312"/>
<dbReference type="CTD" id="4790"/>
<dbReference type="MGI" id="MGI:97312">
    <property type="gene designation" value="Nfkb1"/>
</dbReference>
<dbReference type="VEuPathDB" id="HostDB:ENSMUSG00000028163"/>
<dbReference type="eggNOG" id="KOG0504">
    <property type="taxonomic scope" value="Eukaryota"/>
</dbReference>
<dbReference type="GeneTree" id="ENSGT00940000158625"/>
<dbReference type="HOGENOM" id="CLU_004343_1_0_1"/>
<dbReference type="InParanoid" id="P25799"/>
<dbReference type="OMA" id="SPNQQNH"/>
<dbReference type="OrthoDB" id="10254686at2759"/>
<dbReference type="PhylomeDB" id="P25799"/>
<dbReference type="TreeFam" id="TF325632"/>
<dbReference type="Reactome" id="R-MMU-1169091">
    <property type="pathway name" value="Activation of NF-kappaB in B cells"/>
</dbReference>
<dbReference type="Reactome" id="R-MMU-1810476">
    <property type="pathway name" value="RIP-mediated NFkB activation via ZBP1"/>
</dbReference>
<dbReference type="Reactome" id="R-MMU-193692">
    <property type="pathway name" value="Regulated proteolysis of p75NTR"/>
</dbReference>
<dbReference type="Reactome" id="R-MMU-202424">
    <property type="pathway name" value="Downstream TCR signaling"/>
</dbReference>
<dbReference type="Reactome" id="R-MMU-209560">
    <property type="pathway name" value="NF-kB is activated and signals survival"/>
</dbReference>
<dbReference type="Reactome" id="R-MMU-2871837">
    <property type="pathway name" value="FCERI mediated NF-kB activation"/>
</dbReference>
<dbReference type="Reactome" id="R-MMU-3134963">
    <property type="pathway name" value="DEx/H-box helicases activate type I IFN and inflammatory cytokines production"/>
</dbReference>
<dbReference type="Reactome" id="R-MMU-3214841">
    <property type="pathway name" value="PKMTs methylate histone lysines"/>
</dbReference>
<dbReference type="Reactome" id="R-MMU-445989">
    <property type="pathway name" value="TAK1-dependent IKK and NF-kappa-B activation"/>
</dbReference>
<dbReference type="Reactome" id="R-MMU-448706">
    <property type="pathway name" value="Interleukin-1 processing"/>
</dbReference>
<dbReference type="Reactome" id="R-MMU-5607764">
    <property type="pathway name" value="CLEC7A (Dectin-1) signaling"/>
</dbReference>
<dbReference type="Reactome" id="R-MMU-5621575">
    <property type="pathway name" value="CD209 (DC-SIGN) signaling"/>
</dbReference>
<dbReference type="Reactome" id="R-MMU-5684264">
    <property type="pathway name" value="MAP3K8 (TPL2)-dependent MAPK1/3 activation"/>
</dbReference>
<dbReference type="Reactome" id="R-MMU-6798695">
    <property type="pathway name" value="Neutrophil degranulation"/>
</dbReference>
<dbReference type="Reactome" id="R-MMU-9020702">
    <property type="pathway name" value="Interleukin-1 signaling"/>
</dbReference>
<dbReference type="Reactome" id="R-MMU-933542">
    <property type="pathway name" value="TRAF6 mediated NF-kB activation"/>
</dbReference>
<dbReference type="Reactome" id="R-MMU-9860927">
    <property type="pathway name" value="Turbulent (oscillatory, disturbed) flow shear stress activates signaling by PIEZO1 and integrins in endothelial cells"/>
</dbReference>
<dbReference type="BioGRID-ORCS" id="18033">
    <property type="hits" value="5 hits in 84 CRISPR screens"/>
</dbReference>
<dbReference type="ChiTaRS" id="Nfkb1">
    <property type="organism name" value="mouse"/>
</dbReference>
<dbReference type="EvolutionaryTrace" id="P25799"/>
<dbReference type="PRO" id="PR:P25799"/>
<dbReference type="Proteomes" id="UP000000589">
    <property type="component" value="Chromosome 3"/>
</dbReference>
<dbReference type="RNAct" id="P25799">
    <property type="molecule type" value="protein"/>
</dbReference>
<dbReference type="Bgee" id="ENSMUSG00000028163">
    <property type="expression patterns" value="Expressed in granulocyte and 267 other cell types or tissues"/>
</dbReference>
<dbReference type="ExpressionAtlas" id="P25799">
    <property type="expression patterns" value="baseline and differential"/>
</dbReference>
<dbReference type="GO" id="GO:0000785">
    <property type="term" value="C:chromatin"/>
    <property type="evidence" value="ECO:0007669"/>
    <property type="project" value="Ensembl"/>
</dbReference>
<dbReference type="GO" id="GO:0005737">
    <property type="term" value="C:cytoplasm"/>
    <property type="evidence" value="ECO:0000314"/>
    <property type="project" value="MGI"/>
</dbReference>
<dbReference type="GO" id="GO:0005829">
    <property type="term" value="C:cytosol"/>
    <property type="evidence" value="ECO:0000314"/>
    <property type="project" value="MGI"/>
</dbReference>
<dbReference type="GO" id="GO:0033256">
    <property type="term" value="C:I-kappaB/NF-kappaB complex"/>
    <property type="evidence" value="ECO:0007669"/>
    <property type="project" value="Ensembl"/>
</dbReference>
<dbReference type="GO" id="GO:0005739">
    <property type="term" value="C:mitochondrion"/>
    <property type="evidence" value="ECO:0007669"/>
    <property type="project" value="Ensembl"/>
</dbReference>
<dbReference type="GO" id="GO:0035525">
    <property type="term" value="C:NF-kappaB p50/p65 complex"/>
    <property type="evidence" value="ECO:0000314"/>
    <property type="project" value="MGI"/>
</dbReference>
<dbReference type="GO" id="GO:0005654">
    <property type="term" value="C:nucleoplasm"/>
    <property type="evidence" value="ECO:0007669"/>
    <property type="project" value="Ensembl"/>
</dbReference>
<dbReference type="GO" id="GO:0005634">
    <property type="term" value="C:nucleus"/>
    <property type="evidence" value="ECO:0000314"/>
    <property type="project" value="MGI"/>
</dbReference>
<dbReference type="GO" id="GO:0032991">
    <property type="term" value="C:protein-containing complex"/>
    <property type="evidence" value="ECO:0000250"/>
    <property type="project" value="MGI"/>
</dbReference>
<dbReference type="GO" id="GO:0005667">
    <property type="term" value="C:transcription regulator complex"/>
    <property type="evidence" value="ECO:0000314"/>
    <property type="project" value="MGI"/>
</dbReference>
<dbReference type="GO" id="GO:0042805">
    <property type="term" value="F:actinin binding"/>
    <property type="evidence" value="ECO:0007669"/>
    <property type="project" value="Ensembl"/>
</dbReference>
<dbReference type="GO" id="GO:0003682">
    <property type="term" value="F:chromatin binding"/>
    <property type="evidence" value="ECO:0000314"/>
    <property type="project" value="MGI"/>
</dbReference>
<dbReference type="GO" id="GO:0003677">
    <property type="term" value="F:DNA binding"/>
    <property type="evidence" value="ECO:0000314"/>
    <property type="project" value="MGI"/>
</dbReference>
<dbReference type="GO" id="GO:0001228">
    <property type="term" value="F:DNA-binding transcription activator activity, RNA polymerase II-specific"/>
    <property type="evidence" value="ECO:0007669"/>
    <property type="project" value="Ensembl"/>
</dbReference>
<dbReference type="GO" id="GO:0003700">
    <property type="term" value="F:DNA-binding transcription factor activity"/>
    <property type="evidence" value="ECO:0000250"/>
    <property type="project" value="UniProtKB"/>
</dbReference>
<dbReference type="GO" id="GO:0001227">
    <property type="term" value="F:DNA-binding transcription repressor activity, RNA polymerase II-specific"/>
    <property type="evidence" value="ECO:0000266"/>
    <property type="project" value="MGI"/>
</dbReference>
<dbReference type="GO" id="GO:0042802">
    <property type="term" value="F:identical protein binding"/>
    <property type="evidence" value="ECO:0000353"/>
    <property type="project" value="MGI"/>
</dbReference>
<dbReference type="GO" id="GO:0000978">
    <property type="term" value="F:RNA polymerase II cis-regulatory region sequence-specific DNA binding"/>
    <property type="evidence" value="ECO:0000314"/>
    <property type="project" value="MGI"/>
</dbReference>
<dbReference type="GO" id="GO:0000977">
    <property type="term" value="F:RNA polymerase II transcription regulatory region sequence-specific DNA binding"/>
    <property type="evidence" value="ECO:0000266"/>
    <property type="project" value="MGI"/>
</dbReference>
<dbReference type="GO" id="GO:0043565">
    <property type="term" value="F:sequence-specific DNA binding"/>
    <property type="evidence" value="ECO:0000314"/>
    <property type="project" value="MGI"/>
</dbReference>
<dbReference type="GO" id="GO:0000976">
    <property type="term" value="F:transcription cis-regulatory region binding"/>
    <property type="evidence" value="ECO:0000250"/>
    <property type="project" value="UniProtKB"/>
</dbReference>
<dbReference type="GO" id="GO:0003712">
    <property type="term" value="F:transcription coregulator activity"/>
    <property type="evidence" value="ECO:0000314"/>
    <property type="project" value="MGI"/>
</dbReference>
<dbReference type="GO" id="GO:0140367">
    <property type="term" value="P:antibacterial innate immune response"/>
    <property type="evidence" value="ECO:0007669"/>
    <property type="project" value="Ensembl"/>
</dbReference>
<dbReference type="GO" id="GO:0006915">
    <property type="term" value="P:apoptotic process"/>
    <property type="evidence" value="ECO:0007669"/>
    <property type="project" value="UniProtKB-KW"/>
</dbReference>
<dbReference type="GO" id="GO:0050853">
    <property type="term" value="P:B cell receptor signaling pathway"/>
    <property type="evidence" value="ECO:0000314"/>
    <property type="project" value="MGI"/>
</dbReference>
<dbReference type="GO" id="GO:0007249">
    <property type="term" value="P:canonical NF-kappaB signal transduction"/>
    <property type="evidence" value="ECO:0007669"/>
    <property type="project" value="Ensembl"/>
</dbReference>
<dbReference type="GO" id="GO:1904385">
    <property type="term" value="P:cellular response to angiotensin"/>
    <property type="evidence" value="ECO:0007669"/>
    <property type="project" value="Ensembl"/>
</dbReference>
<dbReference type="GO" id="GO:0071345">
    <property type="term" value="P:cellular response to cytokine stimulus"/>
    <property type="evidence" value="ECO:0000266"/>
    <property type="project" value="MGI"/>
</dbReference>
<dbReference type="GO" id="GO:0071359">
    <property type="term" value="P:cellular response to dsRNA"/>
    <property type="evidence" value="ECO:0000315"/>
    <property type="project" value="MGI"/>
</dbReference>
<dbReference type="GO" id="GO:0097398">
    <property type="term" value="P:cellular response to interleukin-17"/>
    <property type="evidence" value="ECO:0000314"/>
    <property type="project" value="MGI"/>
</dbReference>
<dbReference type="GO" id="GO:0071354">
    <property type="term" value="P:cellular response to interleukin-6"/>
    <property type="evidence" value="ECO:0007669"/>
    <property type="project" value="Ensembl"/>
</dbReference>
<dbReference type="GO" id="GO:0071222">
    <property type="term" value="P:cellular response to lipopolysaccharide"/>
    <property type="evidence" value="ECO:0000314"/>
    <property type="project" value="MGI"/>
</dbReference>
<dbReference type="GO" id="GO:0071260">
    <property type="term" value="P:cellular response to mechanical stimulus"/>
    <property type="evidence" value="ECO:0007669"/>
    <property type="project" value="Ensembl"/>
</dbReference>
<dbReference type="GO" id="GO:0071316">
    <property type="term" value="P:cellular response to nicotine"/>
    <property type="evidence" value="ECO:0007669"/>
    <property type="project" value="Ensembl"/>
</dbReference>
<dbReference type="GO" id="GO:0071356">
    <property type="term" value="P:cellular response to tumor necrosis factor"/>
    <property type="evidence" value="ECO:0000314"/>
    <property type="project" value="MGI"/>
</dbReference>
<dbReference type="GO" id="GO:0098586">
    <property type="term" value="P:cellular response to virus"/>
    <property type="evidence" value="ECO:0000315"/>
    <property type="project" value="MGI"/>
</dbReference>
<dbReference type="GO" id="GO:0010467">
    <property type="term" value="P:gene expression"/>
    <property type="evidence" value="ECO:0000315"/>
    <property type="project" value="MGI"/>
</dbReference>
<dbReference type="GO" id="GO:0007254">
    <property type="term" value="P:JNK cascade"/>
    <property type="evidence" value="ECO:0000315"/>
    <property type="project" value="MGI"/>
</dbReference>
<dbReference type="GO" id="GO:0048535">
    <property type="term" value="P:lymph node development"/>
    <property type="evidence" value="ECO:0000304"/>
    <property type="project" value="MGI"/>
</dbReference>
<dbReference type="GO" id="GO:0060056">
    <property type="term" value="P:mammary gland involution"/>
    <property type="evidence" value="ECO:0000314"/>
    <property type="project" value="MGI"/>
</dbReference>
<dbReference type="GO" id="GO:0000165">
    <property type="term" value="P:MAPK cascade"/>
    <property type="evidence" value="ECO:0000315"/>
    <property type="project" value="MGI"/>
</dbReference>
<dbReference type="GO" id="GO:0001818">
    <property type="term" value="P:negative regulation of cytokine production"/>
    <property type="evidence" value="ECO:0000315"/>
    <property type="project" value="BHF-UCL"/>
</dbReference>
<dbReference type="GO" id="GO:1900016">
    <property type="term" value="P:negative regulation of cytokine production involved in inflammatory response"/>
    <property type="evidence" value="ECO:0007669"/>
    <property type="project" value="Ensembl"/>
</dbReference>
<dbReference type="GO" id="GO:0045892">
    <property type="term" value="P:negative regulation of DNA-templated transcription"/>
    <property type="evidence" value="ECO:0000314"/>
    <property type="project" value="MGI"/>
</dbReference>
<dbReference type="GO" id="GO:0050728">
    <property type="term" value="P:negative regulation of inflammatory response"/>
    <property type="evidence" value="ECO:0000315"/>
    <property type="project" value="MGI"/>
</dbReference>
<dbReference type="GO" id="GO:0032695">
    <property type="term" value="P:negative regulation of interleukin-12 production"/>
    <property type="evidence" value="ECO:0000314"/>
    <property type="project" value="MGI"/>
</dbReference>
<dbReference type="GO" id="GO:0000122">
    <property type="term" value="P:negative regulation of transcription by RNA polymerase II"/>
    <property type="evidence" value="ECO:0000250"/>
    <property type="project" value="UniProtKB"/>
</dbReference>
<dbReference type="GO" id="GO:0010957">
    <property type="term" value="P:negative regulation of vitamin D biosynthetic process"/>
    <property type="evidence" value="ECO:0007669"/>
    <property type="project" value="Ensembl"/>
</dbReference>
<dbReference type="GO" id="GO:0038061">
    <property type="term" value="P:non-canonical NF-kappaB signal transduction"/>
    <property type="evidence" value="ECO:0007669"/>
    <property type="project" value="Ensembl"/>
</dbReference>
<dbReference type="GO" id="GO:0090263">
    <property type="term" value="P:positive regulation of canonical Wnt signaling pathway"/>
    <property type="evidence" value="ECO:0007669"/>
    <property type="project" value="Ensembl"/>
</dbReference>
<dbReference type="GO" id="GO:0010875">
    <property type="term" value="P:positive regulation of cholesterol efflux"/>
    <property type="evidence" value="ECO:0007669"/>
    <property type="project" value="Ensembl"/>
</dbReference>
<dbReference type="GO" id="GO:0045893">
    <property type="term" value="P:positive regulation of DNA-templated transcription"/>
    <property type="evidence" value="ECO:0000250"/>
    <property type="project" value="UniProtKB"/>
</dbReference>
<dbReference type="GO" id="GO:1900127">
    <property type="term" value="P:positive regulation of hyaluronan biosynthetic process"/>
    <property type="evidence" value="ECO:0007669"/>
    <property type="project" value="Ensembl"/>
</dbReference>
<dbReference type="GO" id="GO:0010884">
    <property type="term" value="P:positive regulation of lipid storage"/>
    <property type="evidence" value="ECO:0007669"/>
    <property type="project" value="Ensembl"/>
</dbReference>
<dbReference type="GO" id="GO:0010744">
    <property type="term" value="P:positive regulation of macrophage derived foam cell differentiation"/>
    <property type="evidence" value="ECO:0007669"/>
    <property type="project" value="Ensembl"/>
</dbReference>
<dbReference type="GO" id="GO:2000630">
    <property type="term" value="P:positive regulation of miRNA metabolic process"/>
    <property type="evidence" value="ECO:0007669"/>
    <property type="project" value="Ensembl"/>
</dbReference>
<dbReference type="GO" id="GO:0045944">
    <property type="term" value="P:positive regulation of transcription by RNA polymerase II"/>
    <property type="evidence" value="ECO:0000314"/>
    <property type="project" value="MGI"/>
</dbReference>
<dbReference type="GO" id="GO:0060261">
    <property type="term" value="P:positive regulation of transcription initiation by RNA polymerase II"/>
    <property type="evidence" value="ECO:0000315"/>
    <property type="project" value="MGI"/>
</dbReference>
<dbReference type="GO" id="GO:0035994">
    <property type="term" value="P:response to muscle stretch"/>
    <property type="evidence" value="ECO:0000314"/>
    <property type="project" value="MGI"/>
</dbReference>
<dbReference type="GO" id="GO:0023019">
    <property type="term" value="P:signal transduction involved in regulation of gene expression"/>
    <property type="evidence" value="ECO:0007669"/>
    <property type="project" value="Ensembl"/>
</dbReference>
<dbReference type="CDD" id="cd08797">
    <property type="entry name" value="Death_NFkB1_p105"/>
    <property type="match status" value="1"/>
</dbReference>
<dbReference type="CDD" id="cd01177">
    <property type="entry name" value="IPT_NFkappaB"/>
    <property type="match status" value="1"/>
</dbReference>
<dbReference type="CDD" id="cd07935">
    <property type="entry name" value="RHD-n_NFkB1"/>
    <property type="match status" value="1"/>
</dbReference>
<dbReference type="FunFam" id="2.60.40.10:FF:000046">
    <property type="entry name" value="Nuclear factor NF-kappa-B p105 subunit"/>
    <property type="match status" value="1"/>
</dbReference>
<dbReference type="FunFam" id="1.10.533.10:FF:000018">
    <property type="entry name" value="Nuclear factor NF-kappa-B p105 subunit isoform 1"/>
    <property type="match status" value="1"/>
</dbReference>
<dbReference type="FunFam" id="1.25.40.20:FF:000103">
    <property type="entry name" value="Nuclear factor NF-kappa-B p105 subunit isoform 1"/>
    <property type="match status" value="1"/>
</dbReference>
<dbReference type="FunFam" id="2.60.40.340:FF:000004">
    <property type="entry name" value="Nuclear factor NF-kappa-B p105 subunit isoform 1"/>
    <property type="match status" value="1"/>
</dbReference>
<dbReference type="Gene3D" id="1.25.40.20">
    <property type="entry name" value="Ankyrin repeat-containing domain"/>
    <property type="match status" value="1"/>
</dbReference>
<dbReference type="Gene3D" id="1.10.533.10">
    <property type="entry name" value="Death Domain, Fas"/>
    <property type="match status" value="1"/>
</dbReference>
<dbReference type="Gene3D" id="2.60.40.10">
    <property type="entry name" value="Immunoglobulins"/>
    <property type="match status" value="1"/>
</dbReference>
<dbReference type="Gene3D" id="2.60.40.340">
    <property type="entry name" value="Rel homology domain (RHD), DNA-binding domain"/>
    <property type="match status" value="1"/>
</dbReference>
<dbReference type="InterPro" id="IPR002110">
    <property type="entry name" value="Ankyrin_rpt"/>
</dbReference>
<dbReference type="InterPro" id="IPR036770">
    <property type="entry name" value="Ankyrin_rpt-contain_sf"/>
</dbReference>
<dbReference type="InterPro" id="IPR011029">
    <property type="entry name" value="DEATH-like_dom_sf"/>
</dbReference>
<dbReference type="InterPro" id="IPR000488">
    <property type="entry name" value="Death_dom"/>
</dbReference>
<dbReference type="InterPro" id="IPR013783">
    <property type="entry name" value="Ig-like_fold"/>
</dbReference>
<dbReference type="InterPro" id="IPR014756">
    <property type="entry name" value="Ig_E-set"/>
</dbReference>
<dbReference type="InterPro" id="IPR002909">
    <property type="entry name" value="IPT_dom"/>
</dbReference>
<dbReference type="InterPro" id="IPR033926">
    <property type="entry name" value="IPT_NFkappaB"/>
</dbReference>
<dbReference type="InterPro" id="IPR047096">
    <property type="entry name" value="NF-kB_p105_DD"/>
</dbReference>
<dbReference type="InterPro" id="IPR030503">
    <property type="entry name" value="NF-kB_p105_RHD_N"/>
</dbReference>
<dbReference type="InterPro" id="IPR000451">
    <property type="entry name" value="NFkB/Dor"/>
</dbReference>
<dbReference type="InterPro" id="IPR008967">
    <property type="entry name" value="p53-like_TF_DNA-bd_sf"/>
</dbReference>
<dbReference type="InterPro" id="IPR030492">
    <property type="entry name" value="RHD_CS"/>
</dbReference>
<dbReference type="InterPro" id="IPR032397">
    <property type="entry name" value="RHD_dimer"/>
</dbReference>
<dbReference type="InterPro" id="IPR011539">
    <property type="entry name" value="RHD_DNA_bind_dom"/>
</dbReference>
<dbReference type="InterPro" id="IPR037059">
    <property type="entry name" value="RHD_DNA_bind_dom_sf"/>
</dbReference>
<dbReference type="PANTHER" id="PTHR24169:SF9">
    <property type="entry name" value="NUCLEAR FACTOR NF-KAPPA-B P105 SUBUNIT"/>
    <property type="match status" value="1"/>
</dbReference>
<dbReference type="PANTHER" id="PTHR24169">
    <property type="entry name" value="NUCLEAR FACTOR NF-KAPPA-B PROTEIN"/>
    <property type="match status" value="1"/>
</dbReference>
<dbReference type="Pfam" id="PF00023">
    <property type="entry name" value="Ank"/>
    <property type="match status" value="2"/>
</dbReference>
<dbReference type="Pfam" id="PF12796">
    <property type="entry name" value="Ank_2"/>
    <property type="match status" value="1"/>
</dbReference>
<dbReference type="Pfam" id="PF00531">
    <property type="entry name" value="Death"/>
    <property type="match status" value="1"/>
</dbReference>
<dbReference type="Pfam" id="PF16179">
    <property type="entry name" value="RHD_dimer"/>
    <property type="match status" value="1"/>
</dbReference>
<dbReference type="Pfam" id="PF00554">
    <property type="entry name" value="RHD_DNA_bind"/>
    <property type="match status" value="1"/>
</dbReference>
<dbReference type="PRINTS" id="PR00057">
    <property type="entry name" value="NFKBTNSCPFCT"/>
</dbReference>
<dbReference type="SMART" id="SM00248">
    <property type="entry name" value="ANK"/>
    <property type="match status" value="6"/>
</dbReference>
<dbReference type="SMART" id="SM00005">
    <property type="entry name" value="DEATH"/>
    <property type="match status" value="1"/>
</dbReference>
<dbReference type="SMART" id="SM00429">
    <property type="entry name" value="IPT"/>
    <property type="match status" value="1"/>
</dbReference>
<dbReference type="SUPFAM" id="SSF48403">
    <property type="entry name" value="Ankyrin repeat"/>
    <property type="match status" value="1"/>
</dbReference>
<dbReference type="SUPFAM" id="SSF47986">
    <property type="entry name" value="DEATH domain"/>
    <property type="match status" value="1"/>
</dbReference>
<dbReference type="SUPFAM" id="SSF81296">
    <property type="entry name" value="E set domains"/>
    <property type="match status" value="1"/>
</dbReference>
<dbReference type="SUPFAM" id="SSF49417">
    <property type="entry name" value="p53-like transcription factors"/>
    <property type="match status" value="1"/>
</dbReference>
<dbReference type="PROSITE" id="PS50297">
    <property type="entry name" value="ANK_REP_REGION"/>
    <property type="match status" value="1"/>
</dbReference>
<dbReference type="PROSITE" id="PS50088">
    <property type="entry name" value="ANK_REPEAT"/>
    <property type="match status" value="5"/>
</dbReference>
<dbReference type="PROSITE" id="PS01204">
    <property type="entry name" value="REL_1"/>
    <property type="match status" value="1"/>
</dbReference>
<dbReference type="PROSITE" id="PS50254">
    <property type="entry name" value="REL_2"/>
    <property type="match status" value="1"/>
</dbReference>